<dbReference type="EMBL" id="J01917">
    <property type="protein sequence ID" value="AAA92200.1"/>
    <property type="molecule type" value="Genomic_DNA"/>
</dbReference>
<dbReference type="PIR" id="B03814">
    <property type="entry name" value="Q1AD22"/>
</dbReference>
<dbReference type="RefSeq" id="AP_000162.1">
    <molecule id="P03247-1"/>
    <property type="nucleotide sequence ID" value="AC_000007.1"/>
</dbReference>
<dbReference type="RefSeq" id="NP_040510.1">
    <property type="nucleotide sequence ID" value="NC_001405.1"/>
</dbReference>
<dbReference type="IntAct" id="P03247">
    <property type="interactions" value="5"/>
</dbReference>
<dbReference type="MINT" id="P03247"/>
<dbReference type="GeneID" id="2652981"/>
<dbReference type="Proteomes" id="UP000008167">
    <property type="component" value="Segment"/>
</dbReference>
<dbReference type="GO" id="GO:0044165">
    <property type="term" value="C:host cell endoplasmic reticulum"/>
    <property type="evidence" value="ECO:0000314"/>
    <property type="project" value="UniProtKB"/>
</dbReference>
<dbReference type="GO" id="GO:0044199">
    <property type="term" value="C:host cell nuclear envelope"/>
    <property type="evidence" value="ECO:0000314"/>
    <property type="project" value="UniProtKB"/>
</dbReference>
<dbReference type="GO" id="GO:0044203">
    <property type="term" value="C:host cell nuclear lamina"/>
    <property type="evidence" value="ECO:0007669"/>
    <property type="project" value="UniProtKB-SubCell"/>
</dbReference>
<dbReference type="GO" id="GO:0020002">
    <property type="term" value="C:host cell plasma membrane"/>
    <property type="evidence" value="ECO:0007669"/>
    <property type="project" value="UniProtKB-SubCell"/>
</dbReference>
<dbReference type="GO" id="GO:0016020">
    <property type="term" value="C:membrane"/>
    <property type="evidence" value="ECO:0007669"/>
    <property type="project" value="UniProtKB-KW"/>
</dbReference>
<dbReference type="GO" id="GO:0033668">
    <property type="term" value="P:symbiont-mediated suppression of host apoptosis"/>
    <property type="evidence" value="ECO:0000314"/>
    <property type="project" value="UniProtKB"/>
</dbReference>
<dbReference type="InterPro" id="IPR002924">
    <property type="entry name" value="Adenovir_t-Ag_E1B_19kDa"/>
</dbReference>
<dbReference type="InterPro" id="IPR002475">
    <property type="entry name" value="Bcl2-like"/>
</dbReference>
<dbReference type="Pfam" id="PF01691">
    <property type="entry name" value="Adeno_E1B_19K"/>
    <property type="match status" value="1"/>
</dbReference>
<dbReference type="PROSITE" id="PS50062">
    <property type="entry name" value="BCL2_FAMILY"/>
    <property type="match status" value="1"/>
</dbReference>
<feature type="chain" id="PRO_0000221710" description="E1B protein, small T-antigen">
    <location>
        <begin position="1"/>
        <end position="175"/>
    </location>
</feature>
<feature type="region of interest" description="Disordered" evidence="2">
    <location>
        <begin position="147"/>
        <end position="175"/>
    </location>
</feature>
<comment type="function">
    <text evidence="1">Putative adenovirus Bcl-2 homolog that inhibits apoptosis induced by TNF or FAS pathways, as well as p53-mediated apoptosis. Without E1B 19K function, virus production is compromised because of premature death of host cell. Interacts with Bax protein in cell lysates (By similarity).</text>
</comment>
<comment type="interaction">
    <interactant intactId="EBI-849856">
        <id>P03247</id>
    </interactant>
    <interactant intactId="EBI-849893">
        <id>O60238</id>
        <label>BNIP3L</label>
    </interactant>
    <organismsDiffer>true</organismsDiffer>
    <experiments>7</experiments>
</comment>
<comment type="subcellular location">
    <subcellularLocation>
        <location evidence="1">Host cell membrane</location>
    </subcellularLocation>
    <subcellularLocation>
        <location evidence="1">Host nucleus envelope</location>
    </subcellularLocation>
    <subcellularLocation>
        <location evidence="1">Host nucleus lamina</location>
    </subcellularLocation>
    <text evidence="1">Associated with the plasma and nuclear membranes, and with the insoluble nuclear lamina.</text>
</comment>
<comment type="alternative products">
    <event type="alternative splicing"/>
    <isoform>
        <id>P03247-1</id>
        <name>E1B-175R</name>
        <name>E1B-19K</name>
        <sequence type="displayed"/>
    </isoform>
    <isoform>
        <id>P03244-1</id>
        <name>E1B-495R</name>
        <name>E1B-55K</name>
        <sequence type="external"/>
    </isoform>
    <isoform>
        <id>P03244-2</id>
        <name>E1B-155R</name>
        <name>E1B-18K</name>
        <sequence type="external"/>
    </isoform>
    <isoform>
        <id>P03244-3</id>
        <name>E1B-92R</name>
        <name>E1B-16K</name>
        <sequence type="external"/>
    </isoform>
    <isoform>
        <id>P03244-4</id>
        <name>E1B-82R</name>
        <name>E1B-15K</name>
        <sequence type="external"/>
    </isoform>
    <text>At least five different polypeptides are generated by alternative splicing of a common mRNA precursor.</text>
</comment>
<comment type="similarity">
    <text evidence="3">Belongs to the adenoviridae E1B 19 kDa protein family.</text>
</comment>
<organismHost>
    <name type="scientific">Homo sapiens</name>
    <name type="common">Human</name>
    <dbReference type="NCBI Taxonomy" id="9606"/>
</organismHost>
<gene>
    <name type="primary">E1B</name>
</gene>
<organism>
    <name type="scientific">Human adenovirus C serotype 2</name>
    <name type="common">HAdV-2</name>
    <name type="synonym">Human adenovirus 2</name>
    <dbReference type="NCBI Taxonomy" id="10515"/>
    <lineage>
        <taxon>Viruses</taxon>
        <taxon>Varidnaviria</taxon>
        <taxon>Bamfordvirae</taxon>
        <taxon>Preplasmiviricota</taxon>
        <taxon>Tectiliviricetes</taxon>
        <taxon>Rowavirales</taxon>
        <taxon>Adenoviridae</taxon>
        <taxon>Mastadenovirus</taxon>
        <taxon>Human mastadenovirus C</taxon>
    </lineage>
</organism>
<keyword id="KW-0025">Alternative splicing</keyword>
<keyword id="KW-0053">Apoptosis</keyword>
<keyword id="KW-0244">Early protein</keyword>
<keyword id="KW-1032">Host cell membrane</keyword>
<keyword id="KW-1043">Host membrane</keyword>
<keyword id="KW-1048">Host nucleus</keyword>
<keyword id="KW-0945">Host-virus interaction</keyword>
<keyword id="KW-1081">Inhibition of host apoptosis by viral BCL2-like protein</keyword>
<keyword id="KW-0472">Membrane</keyword>
<keyword id="KW-1119">Modulation of host cell apoptosis by virus</keyword>
<keyword id="KW-1185">Reference proteome</keyword>
<evidence type="ECO:0000250" key="1"/>
<evidence type="ECO:0000256" key="2">
    <source>
        <dbReference type="SAM" id="MobiDB-lite"/>
    </source>
</evidence>
<evidence type="ECO:0000305" key="3"/>
<accession>P03247</accession>
<proteinExistence type="evidence at protein level"/>
<sequence>MEAWECLEDFSAVRNLLEQSSNSTSWFWRFLWGSSQAKLVCRIKEDYKWEFEELLKSCGELFDSLNLGHQALFQEKVIKTLDFSTPGRAAAAVAFLSFIKDKWSEETHLSGGYLLDFLAMHLWRAVVRHKNRLLLLSSVRPAIIPTEEQQQEEARRRRRQEQSPWNPRAGLDPRE</sequence>
<reference key="1">
    <citation type="journal article" date="1982" name="J. Biol. Chem.">
        <title>Nucleotide sequences from the adenovirus-2 genome.</title>
        <authorList>
            <person name="Gingeras T.R."/>
            <person name="Sciaky D."/>
            <person name="Gelinas R.E."/>
            <person name="Bing-Dong J."/>
            <person name="Yen C.E."/>
            <person name="Kelly M.M."/>
            <person name="Bullock P.A."/>
            <person name="Parsons B.L."/>
            <person name="O'Neill K.E."/>
            <person name="Roberts R.J."/>
        </authorList>
    </citation>
    <scope>NUCLEOTIDE SEQUENCE [GENOMIC DNA]</scope>
</reference>
<reference key="2">
    <citation type="journal article" date="1984" name="J. Virol.">
        <title>Early region 1B of adenovirus 2 encodes two coterminal proteins of 495 and 155 amino acid residues.</title>
        <authorList>
            <person name="Anderson C.W."/>
            <person name="Schmitt R.C."/>
            <person name="Smart J.E."/>
            <person name="Lewis J.B."/>
        </authorList>
    </citation>
    <scope>ALTERNATIVE SPLICING (ISOFORMS E1B-495R AND E1B-155R)</scope>
</reference>
<reference key="3">
    <citation type="journal article" date="1985" name="J. Virol.">
        <title>Organization of early region 1B of human adenovirus type 2: identification of four differentially spliced mRNAs.</title>
        <authorList>
            <person name="Virtanen A."/>
            <person name="Pettersson U."/>
        </authorList>
    </citation>
    <scope>ALTERNATIVE SPLICING (ISOFORMS E1B-495R; E1B-175R; E1B-155R; E1B-92R AND E1B-82R)</scope>
</reference>
<reference key="4">
    <citation type="journal article" date="1987" name="J. Virol.">
        <title>Identification of adenovirus type 2 early region 1B proteins that share the same amino terminus as do the 495R and 155R proteins.</title>
        <authorList>
            <person name="Lewis J.B."/>
            <person name="Anderson C.W."/>
        </authorList>
    </citation>
    <scope>ALTERNATIVE SPLICING (ISOFORMS E1B-495R; E1B-175R; E1B-155R; E1B-92R AND E1B-82R)</scope>
</reference>
<name>E1BS_ADE02</name>
<protein>
    <recommendedName>
        <fullName>E1B protein, small T-antigen</fullName>
    </recommendedName>
    <alternativeName>
        <fullName>E1B 19 kDa protein</fullName>
        <shortName>E1B-19K</shortName>
    </alternativeName>
    <alternativeName>
        <fullName>E1B-175R</fullName>
    </alternativeName>
</protein>